<gene>
    <name evidence="5" type="primary">serB</name>
    <name evidence="5" type="ordered locus">stu1519</name>
</gene>
<protein>
    <recommendedName>
        <fullName evidence="4">Phosphoserine phosphatase</fullName>
        <shortName evidence="1">PSP</shortName>
        <shortName evidence="1">PSPase</shortName>
        <ecNumber evidence="2">3.1.3.3</ecNumber>
    </recommendedName>
    <alternativeName>
        <fullName evidence="1">O-phosphoserine phosphohydrolase</fullName>
    </alternativeName>
</protein>
<name>SERB_STRT2</name>
<evidence type="ECO:0000250" key="1">
    <source>
        <dbReference type="UniProtKB" id="Q58989"/>
    </source>
</evidence>
<evidence type="ECO:0000269" key="2">
    <source>
    </source>
</evidence>
<evidence type="ECO:0000305" key="3"/>
<evidence type="ECO:0000305" key="4">
    <source>
    </source>
</evidence>
<evidence type="ECO:0000312" key="5">
    <source>
        <dbReference type="EMBL" id="AAV61122.1"/>
    </source>
</evidence>
<evidence type="ECO:0000312" key="6">
    <source>
        <dbReference type="Proteomes" id="UP000001170"/>
    </source>
</evidence>
<accession>Q5M3B3</accession>
<feature type="chain" id="PRO_0000435471" description="Phosphoserine phosphatase" evidence="3">
    <location>
        <begin position="1"/>
        <end position="215"/>
    </location>
</feature>
<feature type="active site" description="Nucleophile" evidence="1">
    <location>
        <position position="11"/>
    </location>
</feature>
<feature type="active site" description="Proton donor" evidence="1">
    <location>
        <position position="13"/>
    </location>
</feature>
<feature type="binding site" evidence="1">
    <location>
        <position position="11"/>
    </location>
    <ligand>
        <name>Mg(2+)</name>
        <dbReference type="ChEBI" id="CHEBI:18420"/>
    </ligand>
</feature>
<feature type="binding site" evidence="1">
    <location>
        <position position="13"/>
    </location>
    <ligand>
        <name>Mg(2+)</name>
        <dbReference type="ChEBI" id="CHEBI:18420"/>
    </ligand>
</feature>
<feature type="binding site" evidence="1">
    <location>
        <position position="20"/>
    </location>
    <ligand>
        <name>substrate</name>
    </ligand>
</feature>
<feature type="binding site" evidence="1">
    <location>
        <position position="56"/>
    </location>
    <ligand>
        <name>substrate</name>
    </ligand>
</feature>
<feature type="binding site" evidence="1">
    <location>
        <begin position="99"/>
        <end position="100"/>
    </location>
    <ligand>
        <name>substrate</name>
    </ligand>
</feature>
<feature type="binding site" evidence="1">
    <location>
        <position position="144"/>
    </location>
    <ligand>
        <name>substrate</name>
    </ligand>
</feature>
<feature type="binding site" evidence="1">
    <location>
        <position position="167"/>
    </location>
    <ligand>
        <name>Mg(2+)</name>
        <dbReference type="ChEBI" id="CHEBI:18420"/>
    </ligand>
</feature>
<feature type="binding site" evidence="1">
    <location>
        <position position="170"/>
    </location>
    <ligand>
        <name>substrate</name>
    </ligand>
</feature>
<reference evidence="6" key="1">
    <citation type="journal article" date="2004" name="Nat. Biotechnol.">
        <title>Complete sequence and comparative genome analysis of the dairy bacterium Streptococcus thermophilus.</title>
        <authorList>
            <person name="Bolotin A."/>
            <person name="Quinquis B."/>
            <person name="Renault P."/>
            <person name="Sorokin A."/>
            <person name="Ehrlich S.D."/>
            <person name="Kulakauskas S."/>
            <person name="Lapidus A."/>
            <person name="Goltsman E."/>
            <person name="Mazur M."/>
            <person name="Pusch G.D."/>
            <person name="Fonstein M."/>
            <person name="Overbeek R."/>
            <person name="Kyprides N."/>
            <person name="Purnelle B."/>
            <person name="Prozzi D."/>
            <person name="Ngui K."/>
            <person name="Masuy D."/>
            <person name="Hancy F."/>
            <person name="Burteau S."/>
            <person name="Boutry M."/>
            <person name="Delcour J."/>
            <person name="Goffeau A."/>
            <person name="Hols P."/>
        </authorList>
    </citation>
    <scope>NUCLEOTIDE SEQUENCE [LARGE SCALE GENOMIC DNA]</scope>
    <source>
        <strain evidence="6">ATCC BAA-250 / LMG 18311</strain>
    </source>
</reference>
<reference evidence="3" key="2">
    <citation type="journal article" date="2015" name="Proc. Natl. Acad. Sci. U.S.A.">
        <title>Panoramic view of a superfamily of phosphatases through substrate profiling.</title>
        <authorList>
            <person name="Huang H."/>
            <person name="Pandya C."/>
            <person name="Liu C."/>
            <person name="Al-Obaidi N.F."/>
            <person name="Wang M."/>
            <person name="Zheng L."/>
            <person name="Toews Keating S."/>
            <person name="Aono M."/>
            <person name="Love J.D."/>
            <person name="Evans B."/>
            <person name="Seidel R.D."/>
            <person name="Hillerich B.S."/>
            <person name="Garforth S.J."/>
            <person name="Almo S.C."/>
            <person name="Mariano P.S."/>
            <person name="Dunaway-Mariano D."/>
            <person name="Allen K.N."/>
            <person name="Farelli J.D."/>
        </authorList>
    </citation>
    <scope>CATALYTIC ACTIVITY</scope>
    <scope>COFACTOR</scope>
</reference>
<organism evidence="6">
    <name type="scientific">Streptococcus thermophilus (strain ATCC BAA-250 / LMG 18311)</name>
    <dbReference type="NCBI Taxonomy" id="264199"/>
    <lineage>
        <taxon>Bacteria</taxon>
        <taxon>Bacillati</taxon>
        <taxon>Bacillota</taxon>
        <taxon>Bacilli</taxon>
        <taxon>Lactobacillales</taxon>
        <taxon>Streptococcaceae</taxon>
        <taxon>Streptococcus</taxon>
    </lineage>
</organism>
<proteinExistence type="evidence at protein level"/>
<comment type="catalytic activity">
    <reaction evidence="2">
        <text>O-phospho-L-serine + H2O = L-serine + phosphate</text>
        <dbReference type="Rhea" id="RHEA:21208"/>
        <dbReference type="ChEBI" id="CHEBI:15377"/>
        <dbReference type="ChEBI" id="CHEBI:33384"/>
        <dbReference type="ChEBI" id="CHEBI:43474"/>
        <dbReference type="ChEBI" id="CHEBI:57524"/>
        <dbReference type="EC" id="3.1.3.3"/>
    </reaction>
</comment>
<comment type="catalytic activity">
    <reaction evidence="2">
        <text>O-phospho-D-serine + H2O = D-serine + phosphate</text>
        <dbReference type="Rhea" id="RHEA:24873"/>
        <dbReference type="ChEBI" id="CHEBI:15377"/>
        <dbReference type="ChEBI" id="CHEBI:35247"/>
        <dbReference type="ChEBI" id="CHEBI:43474"/>
        <dbReference type="ChEBI" id="CHEBI:58680"/>
        <dbReference type="EC" id="3.1.3.3"/>
    </reaction>
</comment>
<comment type="cofactor">
    <cofactor evidence="2">
        <name>Mg(2+)</name>
        <dbReference type="ChEBI" id="CHEBI:18420"/>
    </cofactor>
</comment>
<comment type="pathway">
    <text evidence="3">Amino-acid biosynthesis; L-serine biosynthesis; L-serine from 3-phospho-D-glycerate: step 3/3.</text>
</comment>
<comment type="similarity">
    <text evidence="3">Belongs to the HAD-like hydrolase superfamily. SerB family.</text>
</comment>
<keyword id="KW-0028">Amino-acid biosynthesis</keyword>
<keyword id="KW-0378">Hydrolase</keyword>
<keyword id="KW-0460">Magnesium</keyword>
<keyword id="KW-0479">Metal-binding</keyword>
<keyword id="KW-1185">Reference proteome</keyword>
<keyword id="KW-0718">Serine biosynthesis</keyword>
<dbReference type="EC" id="3.1.3.3" evidence="2"/>
<dbReference type="EMBL" id="CP000023">
    <property type="protein sequence ID" value="AAV61122.1"/>
    <property type="molecule type" value="Genomic_DNA"/>
</dbReference>
<dbReference type="RefSeq" id="WP_002951517.1">
    <property type="nucleotide sequence ID" value="NC_006448.1"/>
</dbReference>
<dbReference type="SMR" id="Q5M3B3"/>
<dbReference type="STRING" id="264199.stu1519"/>
<dbReference type="KEGG" id="stl:stu1519"/>
<dbReference type="PATRIC" id="fig|264199.4.peg.1487"/>
<dbReference type="eggNOG" id="COG0560">
    <property type="taxonomic scope" value="Bacteria"/>
</dbReference>
<dbReference type="HOGENOM" id="CLU_036368_4_3_9"/>
<dbReference type="UniPathway" id="UPA00135">
    <property type="reaction ID" value="UER00198"/>
</dbReference>
<dbReference type="Proteomes" id="UP000001170">
    <property type="component" value="Chromosome"/>
</dbReference>
<dbReference type="GO" id="GO:0005737">
    <property type="term" value="C:cytoplasm"/>
    <property type="evidence" value="ECO:0007669"/>
    <property type="project" value="TreeGrafter"/>
</dbReference>
<dbReference type="GO" id="GO:0036424">
    <property type="term" value="F:L-phosphoserine phosphatase activity"/>
    <property type="evidence" value="ECO:0007669"/>
    <property type="project" value="InterPro"/>
</dbReference>
<dbReference type="GO" id="GO:0000287">
    <property type="term" value="F:magnesium ion binding"/>
    <property type="evidence" value="ECO:0007669"/>
    <property type="project" value="TreeGrafter"/>
</dbReference>
<dbReference type="GO" id="GO:0006564">
    <property type="term" value="P:L-serine biosynthetic process"/>
    <property type="evidence" value="ECO:0007669"/>
    <property type="project" value="UniProtKB-KW"/>
</dbReference>
<dbReference type="CDD" id="cd07500">
    <property type="entry name" value="HAD_PSP"/>
    <property type="match status" value="1"/>
</dbReference>
<dbReference type="Gene3D" id="3.40.50.1000">
    <property type="entry name" value="HAD superfamily/HAD-like"/>
    <property type="match status" value="1"/>
</dbReference>
<dbReference type="InterPro" id="IPR050582">
    <property type="entry name" value="HAD-like_SerB"/>
</dbReference>
<dbReference type="InterPro" id="IPR036412">
    <property type="entry name" value="HAD-like_sf"/>
</dbReference>
<dbReference type="InterPro" id="IPR023214">
    <property type="entry name" value="HAD_sf"/>
</dbReference>
<dbReference type="InterPro" id="IPR004469">
    <property type="entry name" value="PSP"/>
</dbReference>
<dbReference type="NCBIfam" id="TIGR01488">
    <property type="entry name" value="HAD-SF-IB"/>
    <property type="match status" value="1"/>
</dbReference>
<dbReference type="NCBIfam" id="TIGR00338">
    <property type="entry name" value="serB"/>
    <property type="match status" value="1"/>
</dbReference>
<dbReference type="PANTHER" id="PTHR43344">
    <property type="entry name" value="PHOSPHOSERINE PHOSPHATASE"/>
    <property type="match status" value="1"/>
</dbReference>
<dbReference type="PANTHER" id="PTHR43344:SF2">
    <property type="entry name" value="PHOSPHOSERINE PHOSPHATASE"/>
    <property type="match status" value="1"/>
</dbReference>
<dbReference type="Pfam" id="PF12710">
    <property type="entry name" value="HAD"/>
    <property type="match status" value="1"/>
</dbReference>
<dbReference type="PRINTS" id="PR00119">
    <property type="entry name" value="CATATPASE"/>
</dbReference>
<dbReference type="SFLD" id="SFLDG01136">
    <property type="entry name" value="C1.6:_Phosphoserine_Phosphatas"/>
    <property type="match status" value="1"/>
</dbReference>
<dbReference type="SFLD" id="SFLDF00029">
    <property type="entry name" value="phosphoserine_phosphatase"/>
    <property type="match status" value="1"/>
</dbReference>
<dbReference type="SUPFAM" id="SSF56784">
    <property type="entry name" value="HAD-like"/>
    <property type="match status" value="1"/>
</dbReference>
<sequence length="215" mass="23540">MSEVKGLLVMDVDSTLVQEEVIDLLGEEAGVGREVAEITERAMRGELDFRQALNERVATLKGLPDSIFEKVYARIHFNKGAKELVDELHSRGFKVGLVSGGFHETVDRLAKEAGIDYVKANHLEVIDGFLTGKVYGEIVTKDVKVAKLKDWAAENGLKLSQTIAMGDGANDLPMIKTAGIGIAFCAKPIVRVQAPYQITEPDLYKVIEILDEVGK</sequence>